<reference key="1">
    <citation type="journal article" date="2012" name="Microb. Cell Fact.">
        <title>De novo sequencing, assembly and analysis of the genome of the laboratory strain Saccharomyces cerevisiae CEN.PK113-7D, a model for modern industrial biotechnology.</title>
        <authorList>
            <person name="Nijkamp J.F."/>
            <person name="van den Broek M."/>
            <person name="Datema E."/>
            <person name="de Kok S."/>
            <person name="Bosman L."/>
            <person name="Luttik M.A."/>
            <person name="Daran-Lapujade P."/>
            <person name="Vongsangnak W."/>
            <person name="Nielsen J."/>
            <person name="Heijne W.H.M."/>
            <person name="Klaassen P."/>
            <person name="Paddon C.J."/>
            <person name="Platt D."/>
            <person name="Koetter P."/>
            <person name="van Ham R.C."/>
            <person name="Reinders M.J.T."/>
            <person name="Pronk J.T."/>
            <person name="de Ridder D."/>
            <person name="Daran J.-M."/>
        </authorList>
    </citation>
    <scope>NUCLEOTIDE SEQUENCE [LARGE SCALE GENOMIC DNA]</scope>
    <source>
        <strain>CEN.PK113-7D</strain>
    </source>
</reference>
<reference key="2">
    <citation type="journal article" date="2002" name="Yeast">
        <title>Functional analysis of structural genes for NAD(+)-dependent formate dehydrogenase in Saccharomyces cerevisiae.</title>
        <authorList>
            <person name="Overkamp K.M."/>
            <person name="Koetter P."/>
            <person name="van der Hoek R."/>
            <person name="Schoondermark-Stolk S."/>
            <person name="Luttik M.A.H."/>
            <person name="van Dijken J.P."/>
            <person name="Pronk J.T."/>
        </authorList>
    </citation>
    <scope>NUCLEOTIDE SEQUENCE [GENOMIC DNA] OF 93-204</scope>
    <scope>FUNCTION</scope>
    <scope>SUBCELLULAR LOCATION</scope>
    <scope>INDUCTION</scope>
    <source>
        <strain>CEN.PK113-7D</strain>
    </source>
</reference>
<dbReference type="EC" id="1.17.1.9" evidence="1"/>
<dbReference type="EMBL" id="CM001537">
    <property type="status" value="NOT_ANNOTATED_CDS"/>
    <property type="molecule type" value="Genomic_DNA"/>
</dbReference>
<dbReference type="SMR" id="P0CT22"/>
<dbReference type="Proteomes" id="UP000013192">
    <property type="component" value="Chromosome XVI"/>
</dbReference>
<dbReference type="GO" id="GO:0005829">
    <property type="term" value="C:cytosol"/>
    <property type="evidence" value="ECO:0007669"/>
    <property type="project" value="TreeGrafter"/>
</dbReference>
<dbReference type="GO" id="GO:0008863">
    <property type="term" value="F:formate dehydrogenase (NAD+) activity"/>
    <property type="evidence" value="ECO:0007669"/>
    <property type="project" value="UniProtKB-UniRule"/>
</dbReference>
<dbReference type="GO" id="GO:0051287">
    <property type="term" value="F:NAD binding"/>
    <property type="evidence" value="ECO:0007669"/>
    <property type="project" value="InterPro"/>
</dbReference>
<dbReference type="GO" id="GO:0016616">
    <property type="term" value="F:oxidoreductase activity, acting on the CH-OH group of donors, NAD or NADP as acceptor"/>
    <property type="evidence" value="ECO:0007669"/>
    <property type="project" value="InterPro"/>
</dbReference>
<dbReference type="GO" id="GO:0042183">
    <property type="term" value="P:formate catabolic process"/>
    <property type="evidence" value="ECO:0007669"/>
    <property type="project" value="UniProtKB-UniRule"/>
</dbReference>
<dbReference type="CDD" id="cd05302">
    <property type="entry name" value="FDH"/>
    <property type="match status" value="1"/>
</dbReference>
<dbReference type="FunFam" id="3.40.50.720:FF:000057">
    <property type="entry name" value="Formate dehydrogenase"/>
    <property type="match status" value="1"/>
</dbReference>
<dbReference type="FunFam" id="3.40.50.720:FF:000862">
    <property type="entry name" value="Formate dehydrogenase chloroplastic/mitochondrial"/>
    <property type="match status" value="1"/>
</dbReference>
<dbReference type="Gene3D" id="3.40.50.720">
    <property type="entry name" value="NAD(P)-binding Rossmann-like Domain"/>
    <property type="match status" value="2"/>
</dbReference>
<dbReference type="HAMAP" id="MF_03210">
    <property type="entry name" value="Formate_dehydrogenase"/>
    <property type="match status" value="1"/>
</dbReference>
<dbReference type="InterPro" id="IPR006139">
    <property type="entry name" value="D-isomer_2_OHA_DH_cat_dom"/>
</dbReference>
<dbReference type="InterPro" id="IPR029753">
    <property type="entry name" value="D-isomer_DH_CS"/>
</dbReference>
<dbReference type="InterPro" id="IPR006140">
    <property type="entry name" value="D-isomer_DH_NAD-bd"/>
</dbReference>
<dbReference type="InterPro" id="IPR033689">
    <property type="entry name" value="FDH_NAD-dep"/>
</dbReference>
<dbReference type="InterPro" id="IPR036291">
    <property type="entry name" value="NAD(P)-bd_dom_sf"/>
</dbReference>
<dbReference type="NCBIfam" id="NF005750">
    <property type="entry name" value="PRK07574.1"/>
    <property type="match status" value="1"/>
</dbReference>
<dbReference type="PANTHER" id="PTHR42938">
    <property type="entry name" value="FORMATE DEHYDROGENASE 1"/>
    <property type="match status" value="1"/>
</dbReference>
<dbReference type="PANTHER" id="PTHR42938:SF9">
    <property type="entry name" value="FORMATE DEHYDROGENASE 1"/>
    <property type="match status" value="1"/>
</dbReference>
<dbReference type="Pfam" id="PF00389">
    <property type="entry name" value="2-Hacid_dh"/>
    <property type="match status" value="1"/>
</dbReference>
<dbReference type="Pfam" id="PF02826">
    <property type="entry name" value="2-Hacid_dh_C"/>
    <property type="match status" value="1"/>
</dbReference>
<dbReference type="SUPFAM" id="SSF52283">
    <property type="entry name" value="Formate/glycerate dehydrogenase catalytic domain-like"/>
    <property type="match status" value="1"/>
</dbReference>
<dbReference type="SUPFAM" id="SSF51735">
    <property type="entry name" value="NAD(P)-binding Rossmann-fold domains"/>
    <property type="match status" value="1"/>
</dbReference>
<dbReference type="PROSITE" id="PS00670">
    <property type="entry name" value="D_2_HYDROXYACID_DH_2"/>
    <property type="match status" value="1"/>
</dbReference>
<dbReference type="PROSITE" id="PS00671">
    <property type="entry name" value="D_2_HYDROXYACID_DH_3"/>
    <property type="match status" value="1"/>
</dbReference>
<feature type="chain" id="PRO_0000423513" description="Formate dehydrogenase 2">
    <location>
        <begin position="1"/>
        <end position="376"/>
    </location>
</feature>
<feature type="binding site" evidence="1">
    <location>
        <position position="97"/>
    </location>
    <ligand>
        <name>substrate</name>
    </ligand>
</feature>
<feature type="binding site" evidence="1">
    <location>
        <position position="121"/>
    </location>
    <ligand>
        <name>substrate</name>
    </ligand>
</feature>
<feature type="binding site" evidence="1">
    <location>
        <begin position="176"/>
        <end position="177"/>
    </location>
    <ligand>
        <name>NAD(+)</name>
        <dbReference type="ChEBI" id="CHEBI:57540"/>
    </ligand>
</feature>
<feature type="binding site" evidence="1">
    <location>
        <position position="197"/>
    </location>
    <ligand>
        <name>NAD(+)</name>
        <dbReference type="ChEBI" id="CHEBI:57540"/>
    </ligand>
</feature>
<feature type="binding site" evidence="1">
    <location>
        <begin position="244"/>
        <end position="248"/>
    </location>
    <ligand>
        <name>NAD(+)</name>
        <dbReference type="ChEBI" id="CHEBI:57540"/>
    </ligand>
</feature>
<feature type="binding site" evidence="1">
    <location>
        <position position="270"/>
    </location>
    <ligand>
        <name>NAD(+)</name>
        <dbReference type="ChEBI" id="CHEBI:57540"/>
    </ligand>
</feature>
<feature type="binding site" evidence="1">
    <location>
        <position position="296"/>
    </location>
    <ligand>
        <name>NAD(+)</name>
        <dbReference type="ChEBI" id="CHEBI:57540"/>
    </ligand>
</feature>
<feature type="binding site" evidence="1">
    <location>
        <begin position="325"/>
        <end position="328"/>
    </location>
    <ligand>
        <name>NAD(+)</name>
        <dbReference type="ChEBI" id="CHEBI:57540"/>
    </ligand>
</feature>
<feature type="site" description="Important for catalytic activity" evidence="1">
    <location>
        <position position="272"/>
    </location>
</feature>
<feature type="site" description="Important for catalytic activity" evidence="1">
    <location>
        <position position="325"/>
    </location>
</feature>
<organism>
    <name type="scientific">Saccharomyces cerevisiae (strain CEN.PK113-7D)</name>
    <name type="common">Baker's yeast</name>
    <dbReference type="NCBI Taxonomy" id="889517"/>
    <lineage>
        <taxon>Eukaryota</taxon>
        <taxon>Fungi</taxon>
        <taxon>Dikarya</taxon>
        <taxon>Ascomycota</taxon>
        <taxon>Saccharomycotina</taxon>
        <taxon>Saccharomycetes</taxon>
        <taxon>Saccharomycetales</taxon>
        <taxon>Saccharomycetaceae</taxon>
        <taxon>Saccharomyces</taxon>
    </lineage>
</organism>
<keyword id="KW-0963">Cytoplasm</keyword>
<keyword id="KW-0520">NAD</keyword>
<keyword id="KW-0560">Oxidoreductase</keyword>
<name>FDH2_YEASC</name>
<gene>
    <name type="primary">FDH2</name>
</gene>
<comment type="function">
    <text evidence="1">Catalyzes the NAD(+)-dependent oxidation of formate to carbon dioxide. Formate oxidation is the final step in the methanol oxidation pathway in methylotrophic microorganisms. Has a role in the detoxification of exogenous formate in non-methylotrophic organisms.</text>
</comment>
<comment type="catalytic activity">
    <reaction evidence="1">
        <text>formate + NAD(+) = CO2 + NADH</text>
        <dbReference type="Rhea" id="RHEA:15985"/>
        <dbReference type="ChEBI" id="CHEBI:15740"/>
        <dbReference type="ChEBI" id="CHEBI:16526"/>
        <dbReference type="ChEBI" id="CHEBI:57540"/>
        <dbReference type="ChEBI" id="CHEBI:57945"/>
        <dbReference type="EC" id="1.17.1.9"/>
    </reaction>
</comment>
<comment type="subunit">
    <text evidence="1">Homodimer.</text>
</comment>
<comment type="subcellular location">
    <subcellularLocation>
        <location evidence="1 2">Cytoplasm</location>
    </subcellularLocation>
</comment>
<comment type="induction">
    <text evidence="2">Induced by formate.</text>
</comment>
<comment type="similarity">
    <text evidence="1">Belongs to the D-isomer specific 2-hydroxyacid dehydrogenase family. FDH subfamily.</text>
</comment>
<evidence type="ECO:0000255" key="1">
    <source>
        <dbReference type="HAMAP-Rule" id="MF_03210"/>
    </source>
</evidence>
<evidence type="ECO:0000269" key="2">
    <source>
    </source>
</evidence>
<protein>
    <recommendedName>
        <fullName evidence="1">Formate dehydrogenase 2</fullName>
        <shortName evidence="1">FDH 2</shortName>
        <ecNumber evidence="1">1.17.1.9</ecNumber>
    </recommendedName>
    <alternativeName>
        <fullName evidence="1">NAD-dependent formate dehydrogenase 2</fullName>
    </alternativeName>
</protein>
<accession>P0CT22</accession>
<proteinExistence type="evidence at transcript level"/>
<sequence>MSKGKVLLVLYEGGKHAEEQEKLLGCIENELGIRNFIEEQGYELVTTIDKDPEPTSTVDRELKDAEIVITTPFFPAYISRNRIAEAPNLKLCVTAGVGSDHVDLEAANERKITVTEVTGSNVVSVAEHVMATILVLIRNYNGGHQQAINGEWDIAGVAKNEYDLEDKIISTVGAGRIGYRVLERLVAFNPKKLLYYDYQELPAEAINRLNEASKLFNGRGDIVQRVEKLEDMVAQSDVVTINCPLHKDSRGLFNKKLISHMKDGAYLVNTARGAICVAEDVAEAVKSGKLAGYGGDVWDKQPAPKDHPWRTMDNKDHVGNAMTVHISGTSLHAQKRYAQGVKNILNSYFSKKFDYRPQDIIVQNGSYATRAYGQKK</sequence>